<accession>Q163S6</accession>
<name>COAX_ROSDO</name>
<reference key="1">
    <citation type="journal article" date="2007" name="J. Bacteriol.">
        <title>The complete genome sequence of Roseobacter denitrificans reveals a mixotrophic rather than photosynthetic metabolism.</title>
        <authorList>
            <person name="Swingley W.D."/>
            <person name="Sadekar S."/>
            <person name="Mastrian S.D."/>
            <person name="Matthies H.J."/>
            <person name="Hao J."/>
            <person name="Ramos H."/>
            <person name="Acharya C.R."/>
            <person name="Conrad A.L."/>
            <person name="Taylor H.L."/>
            <person name="Dejesa L.C."/>
            <person name="Shah M.K."/>
            <person name="O'Huallachain M.E."/>
            <person name="Lince M.T."/>
            <person name="Blankenship R.E."/>
            <person name="Beatty J.T."/>
            <person name="Touchman J.W."/>
        </authorList>
    </citation>
    <scope>NUCLEOTIDE SEQUENCE [LARGE SCALE GENOMIC DNA]</scope>
    <source>
        <strain>ATCC 33942 / OCh 114</strain>
    </source>
</reference>
<protein>
    <recommendedName>
        <fullName evidence="1">Type III pantothenate kinase</fullName>
        <ecNumber evidence="1">2.7.1.33</ecNumber>
    </recommendedName>
    <alternativeName>
        <fullName evidence="1">PanK-III</fullName>
    </alternativeName>
    <alternativeName>
        <fullName evidence="1">Pantothenic acid kinase</fullName>
    </alternativeName>
</protein>
<evidence type="ECO:0000255" key="1">
    <source>
        <dbReference type="HAMAP-Rule" id="MF_01274"/>
    </source>
</evidence>
<proteinExistence type="inferred from homology"/>
<keyword id="KW-0067">ATP-binding</keyword>
<keyword id="KW-0173">Coenzyme A biosynthesis</keyword>
<keyword id="KW-0963">Cytoplasm</keyword>
<keyword id="KW-0418">Kinase</keyword>
<keyword id="KW-0479">Metal-binding</keyword>
<keyword id="KW-0547">Nucleotide-binding</keyword>
<keyword id="KW-0630">Potassium</keyword>
<keyword id="KW-1185">Reference proteome</keyword>
<keyword id="KW-0808">Transferase</keyword>
<gene>
    <name evidence="1" type="primary">coaX</name>
    <name type="ordered locus">RD1_3266</name>
</gene>
<dbReference type="EC" id="2.7.1.33" evidence="1"/>
<dbReference type="EMBL" id="CP000362">
    <property type="protein sequence ID" value="ABG32767.1"/>
    <property type="molecule type" value="Genomic_DNA"/>
</dbReference>
<dbReference type="RefSeq" id="WP_011569383.1">
    <property type="nucleotide sequence ID" value="NC_008209.1"/>
</dbReference>
<dbReference type="SMR" id="Q163S6"/>
<dbReference type="STRING" id="375451.RD1_3266"/>
<dbReference type="KEGG" id="rde:RD1_3266"/>
<dbReference type="eggNOG" id="COG1521">
    <property type="taxonomic scope" value="Bacteria"/>
</dbReference>
<dbReference type="HOGENOM" id="CLU_066627_1_0_5"/>
<dbReference type="OrthoDB" id="9804707at2"/>
<dbReference type="UniPathway" id="UPA00241">
    <property type="reaction ID" value="UER00352"/>
</dbReference>
<dbReference type="Proteomes" id="UP000007029">
    <property type="component" value="Chromosome"/>
</dbReference>
<dbReference type="GO" id="GO:0005737">
    <property type="term" value="C:cytoplasm"/>
    <property type="evidence" value="ECO:0007669"/>
    <property type="project" value="UniProtKB-SubCell"/>
</dbReference>
<dbReference type="GO" id="GO:0005524">
    <property type="term" value="F:ATP binding"/>
    <property type="evidence" value="ECO:0007669"/>
    <property type="project" value="UniProtKB-UniRule"/>
</dbReference>
<dbReference type="GO" id="GO:0046872">
    <property type="term" value="F:metal ion binding"/>
    <property type="evidence" value="ECO:0007669"/>
    <property type="project" value="UniProtKB-KW"/>
</dbReference>
<dbReference type="GO" id="GO:0004594">
    <property type="term" value="F:pantothenate kinase activity"/>
    <property type="evidence" value="ECO:0007669"/>
    <property type="project" value="UniProtKB-UniRule"/>
</dbReference>
<dbReference type="GO" id="GO:0015937">
    <property type="term" value="P:coenzyme A biosynthetic process"/>
    <property type="evidence" value="ECO:0007669"/>
    <property type="project" value="UniProtKB-UniRule"/>
</dbReference>
<dbReference type="CDD" id="cd24015">
    <property type="entry name" value="ASKHA_NBD_PanK-III"/>
    <property type="match status" value="1"/>
</dbReference>
<dbReference type="Gene3D" id="3.30.420.40">
    <property type="match status" value="2"/>
</dbReference>
<dbReference type="HAMAP" id="MF_01274">
    <property type="entry name" value="Pantothen_kinase_3"/>
    <property type="match status" value="1"/>
</dbReference>
<dbReference type="InterPro" id="IPR043129">
    <property type="entry name" value="ATPase_NBD"/>
</dbReference>
<dbReference type="InterPro" id="IPR004619">
    <property type="entry name" value="Type_III_PanK"/>
</dbReference>
<dbReference type="NCBIfam" id="TIGR00671">
    <property type="entry name" value="baf"/>
    <property type="match status" value="1"/>
</dbReference>
<dbReference type="NCBIfam" id="NF009844">
    <property type="entry name" value="PRK13318.1-2"/>
    <property type="match status" value="1"/>
</dbReference>
<dbReference type="NCBIfam" id="NF009848">
    <property type="entry name" value="PRK13318.1-6"/>
    <property type="match status" value="1"/>
</dbReference>
<dbReference type="NCBIfam" id="NF009855">
    <property type="entry name" value="PRK13321.1"/>
    <property type="match status" value="1"/>
</dbReference>
<dbReference type="PANTHER" id="PTHR34265">
    <property type="entry name" value="TYPE III PANTOTHENATE KINASE"/>
    <property type="match status" value="1"/>
</dbReference>
<dbReference type="PANTHER" id="PTHR34265:SF1">
    <property type="entry name" value="TYPE III PANTOTHENATE KINASE"/>
    <property type="match status" value="1"/>
</dbReference>
<dbReference type="Pfam" id="PF03309">
    <property type="entry name" value="Pan_kinase"/>
    <property type="match status" value="1"/>
</dbReference>
<dbReference type="SUPFAM" id="SSF53067">
    <property type="entry name" value="Actin-like ATPase domain"/>
    <property type="match status" value="2"/>
</dbReference>
<organism>
    <name type="scientific">Roseobacter denitrificans (strain ATCC 33942 / OCh 114)</name>
    <name type="common">Erythrobacter sp. (strain OCh 114)</name>
    <name type="synonym">Roseobacter denitrificans</name>
    <dbReference type="NCBI Taxonomy" id="375451"/>
    <lineage>
        <taxon>Bacteria</taxon>
        <taxon>Pseudomonadati</taxon>
        <taxon>Pseudomonadota</taxon>
        <taxon>Alphaproteobacteria</taxon>
        <taxon>Rhodobacterales</taxon>
        <taxon>Roseobacteraceae</taxon>
        <taxon>Roseobacter</taxon>
    </lineage>
</organism>
<feature type="chain" id="PRO_0000267584" description="Type III pantothenate kinase">
    <location>
        <begin position="1"/>
        <end position="257"/>
    </location>
</feature>
<feature type="active site" description="Proton acceptor" evidence="1">
    <location>
        <position position="109"/>
    </location>
</feature>
<feature type="binding site" evidence="1">
    <location>
        <begin position="6"/>
        <end position="13"/>
    </location>
    <ligand>
        <name>ATP</name>
        <dbReference type="ChEBI" id="CHEBI:30616"/>
    </ligand>
</feature>
<feature type="binding site" evidence="1">
    <location>
        <begin position="107"/>
        <end position="110"/>
    </location>
    <ligand>
        <name>substrate</name>
    </ligand>
</feature>
<feature type="binding site" evidence="1">
    <location>
        <position position="129"/>
    </location>
    <ligand>
        <name>K(+)</name>
        <dbReference type="ChEBI" id="CHEBI:29103"/>
    </ligand>
</feature>
<feature type="binding site" evidence="1">
    <location>
        <position position="132"/>
    </location>
    <ligand>
        <name>ATP</name>
        <dbReference type="ChEBI" id="CHEBI:30616"/>
    </ligand>
</feature>
<feature type="binding site" evidence="1">
    <location>
        <position position="184"/>
    </location>
    <ligand>
        <name>substrate</name>
    </ligand>
</feature>
<comment type="function">
    <text evidence="1">Catalyzes the phosphorylation of pantothenate (Pan), the first step in CoA biosynthesis.</text>
</comment>
<comment type="catalytic activity">
    <reaction evidence="1">
        <text>(R)-pantothenate + ATP = (R)-4'-phosphopantothenate + ADP + H(+)</text>
        <dbReference type="Rhea" id="RHEA:16373"/>
        <dbReference type="ChEBI" id="CHEBI:10986"/>
        <dbReference type="ChEBI" id="CHEBI:15378"/>
        <dbReference type="ChEBI" id="CHEBI:29032"/>
        <dbReference type="ChEBI" id="CHEBI:30616"/>
        <dbReference type="ChEBI" id="CHEBI:456216"/>
        <dbReference type="EC" id="2.7.1.33"/>
    </reaction>
</comment>
<comment type="cofactor">
    <cofactor evidence="1">
        <name>NH4(+)</name>
        <dbReference type="ChEBI" id="CHEBI:28938"/>
    </cofactor>
    <cofactor evidence="1">
        <name>K(+)</name>
        <dbReference type="ChEBI" id="CHEBI:29103"/>
    </cofactor>
    <text evidence="1">A monovalent cation. Ammonium or potassium.</text>
</comment>
<comment type="pathway">
    <text evidence="1">Cofactor biosynthesis; coenzyme A biosynthesis; CoA from (R)-pantothenate: step 1/5.</text>
</comment>
<comment type="subunit">
    <text evidence="1">Homodimer.</text>
</comment>
<comment type="subcellular location">
    <subcellularLocation>
        <location evidence="1">Cytoplasm</location>
    </subcellularLocation>
</comment>
<comment type="similarity">
    <text evidence="1">Belongs to the type III pantothenate kinase family.</text>
</comment>
<sequence length="257" mass="28559">MLLAIDCGNTNTVFSLWDGTRFVATWRTSTEWQRTADQYYVWLRTLMQFQKLEVEITDVIISSTVPRVVFNLRVFADRYFNTRPLVVGKPDCLLPVDVRVDEGTQVGPDRLVNTVAGFDLFGGDLIMVDFGTATTFDVVDTDGAYVGGVIAPGVNLSLEALHQAAAALPHVDITKPQSVVGTNTVACMQSGVFWGYVGLVREICERIKAERARDMRVISTGGLAPLFQQTEALFDAYQEDLTMHGLTVIYKYNKETE</sequence>